<name>RPPH_SODGM</name>
<organism>
    <name type="scientific">Sodalis glossinidius (strain morsitans)</name>
    <dbReference type="NCBI Taxonomy" id="343509"/>
    <lineage>
        <taxon>Bacteria</taxon>
        <taxon>Pseudomonadati</taxon>
        <taxon>Pseudomonadota</taxon>
        <taxon>Gammaproteobacteria</taxon>
        <taxon>Enterobacterales</taxon>
        <taxon>Bruguierivoracaceae</taxon>
        <taxon>Sodalis</taxon>
    </lineage>
</organism>
<gene>
    <name evidence="1" type="primary">rppH</name>
    <name evidence="1" type="synonym">nudH</name>
    <name type="ordered locus">SG1980</name>
</gene>
<reference key="1">
    <citation type="journal article" date="2006" name="Genome Res.">
        <title>Massive genome erosion and functional adaptations provide insights into the symbiotic lifestyle of Sodalis glossinidius in the tsetse host.</title>
        <authorList>
            <person name="Toh H."/>
            <person name="Weiss B.L."/>
            <person name="Perkin S.A.H."/>
            <person name="Yamashita A."/>
            <person name="Oshima K."/>
            <person name="Hattori M."/>
            <person name="Aksoy S."/>
        </authorList>
    </citation>
    <scope>NUCLEOTIDE SEQUENCE [LARGE SCALE GENOMIC DNA]</scope>
    <source>
        <strain>morsitans</strain>
    </source>
</reference>
<dbReference type="EC" id="3.6.1.-" evidence="1"/>
<dbReference type="EMBL" id="AP008232">
    <property type="protein sequence ID" value="BAE75255.1"/>
    <property type="molecule type" value="Genomic_DNA"/>
</dbReference>
<dbReference type="RefSeq" id="WP_011411710.1">
    <property type="nucleotide sequence ID" value="NC_007712.1"/>
</dbReference>
<dbReference type="SMR" id="Q2NRH0"/>
<dbReference type="STRING" id="343509.SG1980"/>
<dbReference type="KEGG" id="sgl:SG1980"/>
<dbReference type="eggNOG" id="COG1051">
    <property type="taxonomic scope" value="Bacteria"/>
</dbReference>
<dbReference type="HOGENOM" id="CLU_087195_3_2_6"/>
<dbReference type="OrthoDB" id="9816040at2"/>
<dbReference type="BioCyc" id="SGLO343509:SGP1_RS18170-MONOMER"/>
<dbReference type="Proteomes" id="UP000001932">
    <property type="component" value="Chromosome"/>
</dbReference>
<dbReference type="GO" id="GO:0005737">
    <property type="term" value="C:cytoplasm"/>
    <property type="evidence" value="ECO:0007669"/>
    <property type="project" value="TreeGrafter"/>
</dbReference>
<dbReference type="GO" id="GO:0034353">
    <property type="term" value="F:mRNA 5'-diphosphatase activity"/>
    <property type="evidence" value="ECO:0007669"/>
    <property type="project" value="TreeGrafter"/>
</dbReference>
<dbReference type="GO" id="GO:0006402">
    <property type="term" value="P:mRNA catabolic process"/>
    <property type="evidence" value="ECO:0007669"/>
    <property type="project" value="TreeGrafter"/>
</dbReference>
<dbReference type="CDD" id="cd03671">
    <property type="entry name" value="NUDIX_Ap4A_hydrolase_plant_like"/>
    <property type="match status" value="1"/>
</dbReference>
<dbReference type="FunFam" id="3.90.79.10:FF:000001">
    <property type="entry name" value="RNA pyrophosphohydrolase"/>
    <property type="match status" value="1"/>
</dbReference>
<dbReference type="Gene3D" id="3.90.79.10">
    <property type="entry name" value="Nucleoside Triphosphate Pyrophosphohydrolase"/>
    <property type="match status" value="1"/>
</dbReference>
<dbReference type="HAMAP" id="MF_00298">
    <property type="entry name" value="Nudix_RppH"/>
    <property type="match status" value="1"/>
</dbReference>
<dbReference type="InterPro" id="IPR020476">
    <property type="entry name" value="Nudix_hydrolase"/>
</dbReference>
<dbReference type="InterPro" id="IPR015797">
    <property type="entry name" value="NUDIX_hydrolase-like_dom_sf"/>
</dbReference>
<dbReference type="InterPro" id="IPR020084">
    <property type="entry name" value="NUDIX_hydrolase_CS"/>
</dbReference>
<dbReference type="InterPro" id="IPR000086">
    <property type="entry name" value="NUDIX_hydrolase_dom"/>
</dbReference>
<dbReference type="InterPro" id="IPR022927">
    <property type="entry name" value="RppH"/>
</dbReference>
<dbReference type="NCBIfam" id="NF001934">
    <property type="entry name" value="PRK00714.1-1"/>
    <property type="match status" value="1"/>
</dbReference>
<dbReference type="NCBIfam" id="NF001937">
    <property type="entry name" value="PRK00714.1-4"/>
    <property type="match status" value="1"/>
</dbReference>
<dbReference type="NCBIfam" id="NF001938">
    <property type="entry name" value="PRK00714.1-5"/>
    <property type="match status" value="1"/>
</dbReference>
<dbReference type="PANTHER" id="PTHR23114">
    <property type="entry name" value="M7GPPPN-MRNA HYDROLASE"/>
    <property type="match status" value="1"/>
</dbReference>
<dbReference type="PANTHER" id="PTHR23114:SF17">
    <property type="entry name" value="M7GPPPN-MRNA HYDROLASE"/>
    <property type="match status" value="1"/>
</dbReference>
<dbReference type="Pfam" id="PF00293">
    <property type="entry name" value="NUDIX"/>
    <property type="match status" value="1"/>
</dbReference>
<dbReference type="PRINTS" id="PR00502">
    <property type="entry name" value="NUDIXFAMILY"/>
</dbReference>
<dbReference type="SUPFAM" id="SSF55811">
    <property type="entry name" value="Nudix"/>
    <property type="match status" value="1"/>
</dbReference>
<dbReference type="PROSITE" id="PS51462">
    <property type="entry name" value="NUDIX"/>
    <property type="match status" value="1"/>
</dbReference>
<dbReference type="PROSITE" id="PS00893">
    <property type="entry name" value="NUDIX_BOX"/>
    <property type="match status" value="1"/>
</dbReference>
<evidence type="ECO:0000255" key="1">
    <source>
        <dbReference type="HAMAP-Rule" id="MF_00298"/>
    </source>
</evidence>
<feature type="chain" id="PRO_1000022004" description="RNA pyrophosphohydrolase">
    <location>
        <begin position="1"/>
        <end position="175"/>
    </location>
</feature>
<feature type="domain" description="Nudix hydrolase" evidence="1">
    <location>
        <begin position="6"/>
        <end position="149"/>
    </location>
</feature>
<feature type="short sequence motif" description="Nudix box">
    <location>
        <begin position="38"/>
        <end position="59"/>
    </location>
</feature>
<comment type="function">
    <text evidence="1">Accelerates the degradation of transcripts by removing pyrophosphate from the 5'-end of triphosphorylated RNA, leading to a more labile monophosphorylated state that can stimulate subsequent ribonuclease cleavage.</text>
</comment>
<comment type="cofactor">
    <cofactor evidence="1">
        <name>a divalent metal cation</name>
        <dbReference type="ChEBI" id="CHEBI:60240"/>
    </cofactor>
</comment>
<comment type="similarity">
    <text evidence="1">Belongs to the Nudix hydrolase family. RppH subfamily.</text>
</comment>
<accession>Q2NRH0</accession>
<keyword id="KW-0378">Hydrolase</keyword>
<sequence length="175" mass="20577">MIDDDGYRPNVGIVICNLDGQVLWARRYGQHSWQFPQGGINAGETAEQAMYRELFEEVGLSRKDVRILASTRNWLRYKLPKRLVRWDTKPVCIGQKQKWFLLQLLCPDADINMQRGGIPEFDGWRWVSFWYPVRQVVSFKRDVYRRVMKEFSGVVMPLQETAAQRSASAHRRKRG</sequence>
<proteinExistence type="inferred from homology"/>
<protein>
    <recommendedName>
        <fullName evidence="1">RNA pyrophosphohydrolase</fullName>
        <ecNumber evidence="1">3.6.1.-</ecNumber>
    </recommendedName>
    <alternativeName>
        <fullName evidence="1">(Di)nucleoside polyphosphate hydrolase</fullName>
    </alternativeName>
</protein>